<sequence>MTDNTRLRIAMQKSGRLSDDSRELLARCGIKINLHTQRLIAMAENMPIDILRVRDDDIPGLVMDGVVDLGIIGENVLEEELLNRRAQGEDPRYFTLRRLDFGGCRLSLATPVDEAWDGPLSLNGKRIATSYPHLLKRYLDQKGISFKSCLLNGSVEVAPRAGLADAICDLVSTGATLEANGLREVEVIYRSKACLIQRDGEMEESKQQLIDKLMIRIQGVIQARESKYIMMHAPTERLDEVIALLPGAERPTILPLAGDQQRVAMHMVSSETLFWETMEKLKALGASSILVLPIEKMME</sequence>
<keyword id="KW-0028">Amino-acid biosynthesis</keyword>
<keyword id="KW-0067">ATP-binding</keyword>
<keyword id="KW-0963">Cytoplasm</keyword>
<keyword id="KW-0328">Glycosyltransferase</keyword>
<keyword id="KW-0368">Histidine biosynthesis</keyword>
<keyword id="KW-0460">Magnesium</keyword>
<keyword id="KW-0479">Metal-binding</keyword>
<keyword id="KW-0547">Nucleotide-binding</keyword>
<keyword id="KW-0808">Transferase</keyword>
<accession>B7NC59</accession>
<proteinExistence type="inferred from homology"/>
<name>HIS1_ECOLU</name>
<dbReference type="EC" id="2.4.2.17" evidence="1"/>
<dbReference type="EMBL" id="CU928163">
    <property type="protein sequence ID" value="CAR13549.1"/>
    <property type="molecule type" value="Genomic_DNA"/>
</dbReference>
<dbReference type="RefSeq" id="WP_000131788.1">
    <property type="nucleotide sequence ID" value="NC_011751.1"/>
</dbReference>
<dbReference type="RefSeq" id="YP_002413077.1">
    <property type="nucleotide sequence ID" value="NC_011751.1"/>
</dbReference>
<dbReference type="SMR" id="B7NC59"/>
<dbReference type="STRING" id="585056.ECUMN_2361"/>
<dbReference type="KEGG" id="eum:ECUMN_2361"/>
<dbReference type="PATRIC" id="fig|585056.7.peg.2542"/>
<dbReference type="HOGENOM" id="CLU_038115_1_0_6"/>
<dbReference type="UniPathway" id="UPA00031">
    <property type="reaction ID" value="UER00006"/>
</dbReference>
<dbReference type="Proteomes" id="UP000007097">
    <property type="component" value="Chromosome"/>
</dbReference>
<dbReference type="GO" id="GO:0005737">
    <property type="term" value="C:cytoplasm"/>
    <property type="evidence" value="ECO:0007669"/>
    <property type="project" value="UniProtKB-SubCell"/>
</dbReference>
<dbReference type="GO" id="GO:0005524">
    <property type="term" value="F:ATP binding"/>
    <property type="evidence" value="ECO:0007669"/>
    <property type="project" value="UniProtKB-KW"/>
</dbReference>
<dbReference type="GO" id="GO:0003879">
    <property type="term" value="F:ATP phosphoribosyltransferase activity"/>
    <property type="evidence" value="ECO:0007669"/>
    <property type="project" value="UniProtKB-UniRule"/>
</dbReference>
<dbReference type="GO" id="GO:0000287">
    <property type="term" value="F:magnesium ion binding"/>
    <property type="evidence" value="ECO:0007669"/>
    <property type="project" value="UniProtKB-UniRule"/>
</dbReference>
<dbReference type="GO" id="GO:0000105">
    <property type="term" value="P:L-histidine biosynthetic process"/>
    <property type="evidence" value="ECO:0007669"/>
    <property type="project" value="UniProtKB-UniRule"/>
</dbReference>
<dbReference type="CDD" id="cd13592">
    <property type="entry name" value="PBP2_HisGL2"/>
    <property type="match status" value="1"/>
</dbReference>
<dbReference type="FunFam" id="3.30.70.120:FF:000002">
    <property type="entry name" value="ATP phosphoribosyltransferase"/>
    <property type="match status" value="1"/>
</dbReference>
<dbReference type="FunFam" id="3.40.190.10:FF:000008">
    <property type="entry name" value="ATP phosphoribosyltransferase"/>
    <property type="match status" value="1"/>
</dbReference>
<dbReference type="Gene3D" id="3.30.70.120">
    <property type="match status" value="1"/>
</dbReference>
<dbReference type="Gene3D" id="3.40.190.10">
    <property type="entry name" value="Periplasmic binding protein-like II"/>
    <property type="match status" value="2"/>
</dbReference>
<dbReference type="HAMAP" id="MF_00079">
    <property type="entry name" value="HisG_Long"/>
    <property type="match status" value="1"/>
</dbReference>
<dbReference type="InterPro" id="IPR020621">
    <property type="entry name" value="ATP-PRT_HisG_long"/>
</dbReference>
<dbReference type="InterPro" id="IPR013820">
    <property type="entry name" value="ATP_PRibTrfase_cat"/>
</dbReference>
<dbReference type="InterPro" id="IPR018198">
    <property type="entry name" value="ATP_PRibTrfase_CS"/>
</dbReference>
<dbReference type="InterPro" id="IPR001348">
    <property type="entry name" value="ATP_PRibTrfase_HisG"/>
</dbReference>
<dbReference type="InterPro" id="IPR013115">
    <property type="entry name" value="HisG_C"/>
</dbReference>
<dbReference type="InterPro" id="IPR011322">
    <property type="entry name" value="N-reg_PII-like_a/b"/>
</dbReference>
<dbReference type="InterPro" id="IPR015867">
    <property type="entry name" value="N-reg_PII/ATP_PRibTrfase_C"/>
</dbReference>
<dbReference type="NCBIfam" id="TIGR00070">
    <property type="entry name" value="hisG"/>
    <property type="match status" value="1"/>
</dbReference>
<dbReference type="NCBIfam" id="TIGR03455">
    <property type="entry name" value="HisG_C-term"/>
    <property type="match status" value="1"/>
</dbReference>
<dbReference type="PANTHER" id="PTHR21403:SF8">
    <property type="entry name" value="ATP PHOSPHORIBOSYLTRANSFERASE"/>
    <property type="match status" value="1"/>
</dbReference>
<dbReference type="PANTHER" id="PTHR21403">
    <property type="entry name" value="ATP PHOSPHORIBOSYLTRANSFERASE ATP-PRTASE"/>
    <property type="match status" value="1"/>
</dbReference>
<dbReference type="Pfam" id="PF01634">
    <property type="entry name" value="HisG"/>
    <property type="match status" value="1"/>
</dbReference>
<dbReference type="Pfam" id="PF08029">
    <property type="entry name" value="HisG_C"/>
    <property type="match status" value="1"/>
</dbReference>
<dbReference type="SUPFAM" id="SSF54913">
    <property type="entry name" value="GlnB-like"/>
    <property type="match status" value="1"/>
</dbReference>
<dbReference type="SUPFAM" id="SSF53850">
    <property type="entry name" value="Periplasmic binding protein-like II"/>
    <property type="match status" value="1"/>
</dbReference>
<dbReference type="PROSITE" id="PS01316">
    <property type="entry name" value="ATP_P_PHORIBOSYLTR"/>
    <property type="match status" value="1"/>
</dbReference>
<organism>
    <name type="scientific">Escherichia coli O17:K52:H18 (strain UMN026 / ExPEC)</name>
    <dbReference type="NCBI Taxonomy" id="585056"/>
    <lineage>
        <taxon>Bacteria</taxon>
        <taxon>Pseudomonadati</taxon>
        <taxon>Pseudomonadota</taxon>
        <taxon>Gammaproteobacteria</taxon>
        <taxon>Enterobacterales</taxon>
        <taxon>Enterobacteriaceae</taxon>
        <taxon>Escherichia</taxon>
    </lineage>
</organism>
<feature type="chain" id="PRO_1000117091" description="ATP phosphoribosyltransferase">
    <location>
        <begin position="1"/>
        <end position="299"/>
    </location>
</feature>
<evidence type="ECO:0000255" key="1">
    <source>
        <dbReference type="HAMAP-Rule" id="MF_00079"/>
    </source>
</evidence>
<comment type="function">
    <text evidence="1">Catalyzes the condensation of ATP and 5-phosphoribose 1-diphosphate to form N'-(5'-phosphoribosyl)-ATP (PR-ATP). Has a crucial role in the pathway because the rate of histidine biosynthesis seems to be controlled primarily by regulation of HisG enzymatic activity.</text>
</comment>
<comment type="catalytic activity">
    <reaction evidence="1">
        <text>1-(5-phospho-beta-D-ribosyl)-ATP + diphosphate = 5-phospho-alpha-D-ribose 1-diphosphate + ATP</text>
        <dbReference type="Rhea" id="RHEA:18473"/>
        <dbReference type="ChEBI" id="CHEBI:30616"/>
        <dbReference type="ChEBI" id="CHEBI:33019"/>
        <dbReference type="ChEBI" id="CHEBI:58017"/>
        <dbReference type="ChEBI" id="CHEBI:73183"/>
        <dbReference type="EC" id="2.4.2.17"/>
    </reaction>
</comment>
<comment type="cofactor">
    <cofactor evidence="1">
        <name>Mg(2+)</name>
        <dbReference type="ChEBI" id="CHEBI:18420"/>
    </cofactor>
</comment>
<comment type="activity regulation">
    <text evidence="1">Feedback inhibited by histidine.</text>
</comment>
<comment type="pathway">
    <text evidence="1">Amino-acid biosynthesis; L-histidine biosynthesis; L-histidine from 5-phospho-alpha-D-ribose 1-diphosphate: step 1/9.</text>
</comment>
<comment type="subunit">
    <text evidence="1">Equilibrium between an active dimeric form, an inactive hexameric form and higher aggregates. Interconversion between the various forms is largely reversible and is influenced by the natural substrates and inhibitors of the enzyme.</text>
</comment>
<comment type="subcellular location">
    <subcellularLocation>
        <location evidence="1">Cytoplasm</location>
    </subcellularLocation>
</comment>
<comment type="similarity">
    <text evidence="1">Belongs to the ATP phosphoribosyltransferase family. Long subfamily.</text>
</comment>
<reference key="1">
    <citation type="journal article" date="2009" name="PLoS Genet.">
        <title>Organised genome dynamics in the Escherichia coli species results in highly diverse adaptive paths.</title>
        <authorList>
            <person name="Touchon M."/>
            <person name="Hoede C."/>
            <person name="Tenaillon O."/>
            <person name="Barbe V."/>
            <person name="Baeriswyl S."/>
            <person name="Bidet P."/>
            <person name="Bingen E."/>
            <person name="Bonacorsi S."/>
            <person name="Bouchier C."/>
            <person name="Bouvet O."/>
            <person name="Calteau A."/>
            <person name="Chiapello H."/>
            <person name="Clermont O."/>
            <person name="Cruveiller S."/>
            <person name="Danchin A."/>
            <person name="Diard M."/>
            <person name="Dossat C."/>
            <person name="Karoui M.E."/>
            <person name="Frapy E."/>
            <person name="Garry L."/>
            <person name="Ghigo J.M."/>
            <person name="Gilles A.M."/>
            <person name="Johnson J."/>
            <person name="Le Bouguenec C."/>
            <person name="Lescat M."/>
            <person name="Mangenot S."/>
            <person name="Martinez-Jehanne V."/>
            <person name="Matic I."/>
            <person name="Nassif X."/>
            <person name="Oztas S."/>
            <person name="Petit M.A."/>
            <person name="Pichon C."/>
            <person name="Rouy Z."/>
            <person name="Ruf C.S."/>
            <person name="Schneider D."/>
            <person name="Tourret J."/>
            <person name="Vacherie B."/>
            <person name="Vallenet D."/>
            <person name="Medigue C."/>
            <person name="Rocha E.P.C."/>
            <person name="Denamur E."/>
        </authorList>
    </citation>
    <scope>NUCLEOTIDE SEQUENCE [LARGE SCALE GENOMIC DNA]</scope>
    <source>
        <strain>UMN026 / ExPEC</strain>
    </source>
</reference>
<gene>
    <name evidence="1" type="primary">hisG</name>
    <name type="ordered locus">ECUMN_2361</name>
</gene>
<protein>
    <recommendedName>
        <fullName evidence="1">ATP phosphoribosyltransferase</fullName>
        <shortName evidence="1">ATP-PRT</shortName>
        <shortName evidence="1">ATP-PRTase</shortName>
        <ecNumber evidence="1">2.4.2.17</ecNumber>
    </recommendedName>
</protein>